<sequence length="369" mass="40105">MAHCTEYMNAPKKLPADVAEELATTAQKLVQAGKGILAADESTQTIKKRFDNIKLENTIENRASYRDLLFGTKGLGKFISGAILFEETLFQKNEAGVPMVNLLHNENIIPGIKVDKGLVNIPCTDEEKSTQGLDGLAERCKEYYKAGARFAKWRTVLVIDTAKGKPTDLSIHETAWGLARYASICQQNRLVPIVEPEILADGPHSIEVCAVVTQKVLSCVFKALQENGVLLEGALLKPNMVTAGYECTAKTTTQDVGFLTVRTLRRTVPPALPGVVFLSGGQSEEEASVNLNSINALGPHPWALTFSYGRALQASVLNTWQGKKENVAKAREVLLQRAEANSLATYGKYKGGAGGENAGASLYEKKYVY</sequence>
<keyword id="KW-0002">3D-structure</keyword>
<keyword id="KW-0009">Actin-binding</keyword>
<keyword id="KW-0963">Cytoplasm</keyword>
<keyword id="KW-0324">Glycolysis</keyword>
<keyword id="KW-1032">Host cell membrane</keyword>
<keyword id="KW-1043">Host membrane</keyword>
<keyword id="KW-0456">Lyase</keyword>
<keyword id="KW-0472">Membrane</keyword>
<keyword id="KW-1185">Reference proteome</keyword>
<keyword id="KW-0704">Schiff base</keyword>
<reference key="1">
    <citation type="journal article" date="2002" name="Nature">
        <title>Genome sequence of the human malaria parasite Plasmodium falciparum.</title>
        <authorList>
            <person name="Gardner M.J."/>
            <person name="Hall N."/>
            <person name="Fung E."/>
            <person name="White O."/>
            <person name="Berriman M."/>
            <person name="Hyman R.W."/>
            <person name="Carlton J.M."/>
            <person name="Pain A."/>
            <person name="Nelson K.E."/>
            <person name="Bowman S."/>
            <person name="Paulsen I.T."/>
            <person name="James K.D."/>
            <person name="Eisen J.A."/>
            <person name="Rutherford K.M."/>
            <person name="Salzberg S.L."/>
            <person name="Craig A."/>
            <person name="Kyes S."/>
            <person name="Chan M.-S."/>
            <person name="Nene V."/>
            <person name="Shallom S.J."/>
            <person name="Suh B."/>
            <person name="Peterson J."/>
            <person name="Angiuoli S."/>
            <person name="Pertea M."/>
            <person name="Allen J."/>
            <person name="Selengut J."/>
            <person name="Haft D."/>
            <person name="Mather M.W."/>
            <person name="Vaidya A.B."/>
            <person name="Martin D.M.A."/>
            <person name="Fairlamb A.H."/>
            <person name="Fraunholz M.J."/>
            <person name="Roos D.S."/>
            <person name="Ralph S.A."/>
            <person name="McFadden G.I."/>
            <person name="Cummings L.M."/>
            <person name="Subramanian G.M."/>
            <person name="Mungall C."/>
            <person name="Venter J.C."/>
            <person name="Carucci D.J."/>
            <person name="Hoffman S.L."/>
            <person name="Newbold C."/>
            <person name="Davis R.W."/>
            <person name="Fraser C.M."/>
            <person name="Barrell B.G."/>
        </authorList>
    </citation>
    <scope>NUCLEOTIDE SEQUENCE [LARGE SCALE GENOMIC DNA]</scope>
    <source>
        <strain>3D7</strain>
    </source>
</reference>
<reference key="2">
    <citation type="journal article" date="2006" name="J. Biol. Chem.">
        <title>A conserved molecular motor drives cell invasion and gliding motility across malaria life cycle stages and other apicomplexan parasites.</title>
        <authorList>
            <person name="Baum J."/>
            <person name="Richard D."/>
            <person name="Healer J."/>
            <person name="Rug M."/>
            <person name="Krnajski Z."/>
            <person name="Gilberger T.W."/>
            <person name="Green J.L."/>
            <person name="Holder A.A."/>
            <person name="Cowman A.F."/>
        </authorList>
    </citation>
    <scope>FUNCTION</scope>
    <scope>INTERACTION WITH TRAP AND MTRAP</scope>
    <scope>DEVELOPMENTAL STAGE</scope>
</reference>
<reference key="3">
    <citation type="journal article" date="2012" name="MBio">
        <title>Binding of aldolase and glyceraldehyde-3-phosphate dehydrogenase to the cytoplasmic tails of Plasmodium falciparum merozoite duffy binding-like and reticulocyte homology ligands.</title>
        <authorList>
            <person name="Pal-Bhowmick I."/>
            <person name="Andersen J."/>
            <person name="Srinivasan P."/>
            <person name="Narum D.L."/>
            <person name="Bosch J."/>
            <person name="Miller L.H."/>
        </authorList>
    </citation>
    <scope>FUNCTION</scope>
    <scope>INTERACTION WITH TRAP; RH1; RH2B AND RH4</scope>
</reference>
<reference key="4">
    <citation type="journal article" date="2014" name="Mol. Biochem. Parasitol.">
        <title>Plasmodium falciparum aldolase and the C-terminal cytoplasmic domain of certain apical organellar proteins promote actin polymerization.</title>
        <authorList>
            <person name="Diaz S.A."/>
            <person name="Martin S.R."/>
            <person name="Grainger M."/>
            <person name="Howell S.A."/>
            <person name="Green J.L."/>
            <person name="Holder A.A."/>
        </authorList>
    </citation>
    <scope>FUNCTION</scope>
    <scope>INTERACTION WITH G ACTIN AND F ACTIN</scope>
</reference>
<reference key="5">
    <citation type="journal article" date="2016" name="PLoS ONE">
        <title>The Binding of Plasmodium falciparum Adhesins and Erythrocyte Invasion Proteins to Aldolase Is Enhanced by Phosphorylation.</title>
        <authorList>
            <person name="Diaz S.A."/>
            <person name="Martin S.R."/>
            <person name="Howell S.A."/>
            <person name="Grainger M."/>
            <person name="Moon R.W."/>
            <person name="Green J.L."/>
            <person name="Holder A.A."/>
        </authorList>
    </citation>
    <scope>FUNCTION</scope>
    <scope>INTERACTION WITH TRAP; MTRAP; RH1; RH2B; RH4; AMA1; EBA140; EBA175 AND EBA181</scope>
</reference>
<reference evidence="14" key="6">
    <citation type="journal article" date="2015" name="Malar. J.">
        <title>Inhibition by stabilization: targeting the Plasmodium falciparum aldolase-TRAP complex.</title>
        <authorList>
            <person name="Nemetski S.M."/>
            <person name="Cardozo T.J."/>
            <person name="Bosch G."/>
            <person name="Weltzer R."/>
            <person name="O'Malley K."/>
            <person name="Ejigiri I."/>
            <person name="Kumar K.A."/>
            <person name="Buscaglia C.A."/>
            <person name="Nussenzweig V."/>
            <person name="Sinnis P."/>
            <person name="Levitskaya J."/>
            <person name="Bosch J."/>
        </authorList>
    </citation>
    <scope>X-RAY CRYSTALLOGRAPHY (2.11 ANGSTROMS) IN COMPLEX WITH P.BERGHEI TRAP PEPTIDE (604-606) AND INHIBITOR</scope>
    <scope>CATALYTIC ACTIVITY</scope>
    <scope>ACTIVITY REGULATION</scope>
    <scope>PATHWAY</scope>
    <scope>SUBUNIT</scope>
</reference>
<evidence type="ECO:0000250" key="1">
    <source>
        <dbReference type="UniProtKB" id="P00883"/>
    </source>
</evidence>
<evidence type="ECO:0000250" key="2">
    <source>
        <dbReference type="UniProtKB" id="P14223"/>
    </source>
</evidence>
<evidence type="ECO:0000250" key="3">
    <source>
        <dbReference type="UniProtKB" id="Q27744"/>
    </source>
</evidence>
<evidence type="ECO:0000250" key="4">
    <source>
        <dbReference type="UniProtKB" id="Q8I8I2"/>
    </source>
</evidence>
<evidence type="ECO:0000269" key="5">
    <source>
    </source>
</evidence>
<evidence type="ECO:0000269" key="6">
    <source>
    </source>
</evidence>
<evidence type="ECO:0000269" key="7">
    <source>
    </source>
</evidence>
<evidence type="ECO:0000269" key="8">
    <source>
    </source>
</evidence>
<evidence type="ECO:0000269" key="9">
    <source>
    </source>
</evidence>
<evidence type="ECO:0000305" key="10"/>
<evidence type="ECO:0000305" key="11">
    <source>
    </source>
</evidence>
<evidence type="ECO:0000305" key="12">
    <source>
    </source>
</evidence>
<evidence type="ECO:0000305" key="13">
    <source>
    </source>
</evidence>
<evidence type="ECO:0007744" key="14">
    <source>
        <dbReference type="PDB" id="4TR9"/>
    </source>
</evidence>
<evidence type="ECO:0007829" key="15">
    <source>
        <dbReference type="PDB" id="4TR9"/>
    </source>
</evidence>
<accession>Q7KQL9</accession>
<accession>A0A144A3T1</accession>
<organism>
    <name type="scientific">Plasmodium falciparum (isolate 3D7)</name>
    <dbReference type="NCBI Taxonomy" id="36329"/>
    <lineage>
        <taxon>Eukaryota</taxon>
        <taxon>Sar</taxon>
        <taxon>Alveolata</taxon>
        <taxon>Apicomplexa</taxon>
        <taxon>Aconoidasida</taxon>
        <taxon>Haemosporida</taxon>
        <taxon>Plasmodiidae</taxon>
        <taxon>Plasmodium</taxon>
        <taxon>Plasmodium (Laverania)</taxon>
    </lineage>
</organism>
<feature type="chain" id="PRO_0000233386" description="Fructose-bisphosphate aldolase">
    <location>
        <begin position="1"/>
        <end position="369"/>
    </location>
</feature>
<feature type="active site" description="Proton acceptor" evidence="4">
    <location>
        <position position="195"/>
    </location>
</feature>
<feature type="active site" description="Schiff-base intermediate with dihydroxyacetone phosphate" evidence="4">
    <location>
        <position position="237"/>
    </location>
</feature>
<feature type="binding site" evidence="4">
    <location>
        <position position="40"/>
    </location>
    <ligand>
        <name>dihydroxyacetone phosphate</name>
        <dbReference type="ChEBI" id="CHEBI:57642"/>
    </ligand>
</feature>
<feature type="binding site" evidence="4">
    <location>
        <position position="42"/>
    </location>
    <ligand>
        <name>D-glyceraldehyde 3-phosphate</name>
        <dbReference type="ChEBI" id="CHEBI:59776"/>
    </ligand>
</feature>
<feature type="binding site" evidence="4">
    <location>
        <position position="45"/>
    </location>
    <ligand>
        <name>D-glyceraldehyde 3-phosphate</name>
        <dbReference type="ChEBI" id="CHEBI:59776"/>
    </ligand>
</feature>
<feature type="binding site" evidence="1">
    <location>
        <position position="49"/>
    </location>
    <ligand>
        <name>beta-D-fructose 1,6-bisphosphate</name>
        <dbReference type="ChEBI" id="CHEBI:32966"/>
    </ligand>
</feature>
<feature type="binding site" evidence="4">
    <location>
        <position position="113"/>
    </location>
    <ligand>
        <name>D-glyceraldehyde 3-phosphate</name>
        <dbReference type="ChEBI" id="CHEBI:59776"/>
    </ligand>
</feature>
<feature type="binding site" evidence="4">
    <location>
        <position position="152"/>
    </location>
    <ligand>
        <name>dihydroxyacetone phosphate</name>
        <dbReference type="ChEBI" id="CHEBI:57642"/>
    </ligand>
</feature>
<feature type="binding site" evidence="4">
    <location>
        <position position="195"/>
    </location>
    <ligand>
        <name>D-glyceraldehyde 3-phosphate</name>
        <dbReference type="ChEBI" id="CHEBI:59776"/>
    </ligand>
</feature>
<feature type="binding site" evidence="4">
    <location>
        <position position="237"/>
    </location>
    <ligand>
        <name>dihydroxyacetone phosphate</name>
        <dbReference type="ChEBI" id="CHEBI:57642"/>
    </ligand>
</feature>
<feature type="binding site" evidence="1">
    <location>
        <begin position="279"/>
        <end position="281"/>
    </location>
    <ligand>
        <name>beta-D-fructose 1,6-bisphosphate</name>
        <dbReference type="ChEBI" id="CHEBI:32966"/>
    </ligand>
</feature>
<feature type="binding site" evidence="4">
    <location>
        <position position="279"/>
    </location>
    <ligand>
        <name>dihydroxyacetone phosphate</name>
        <dbReference type="ChEBI" id="CHEBI:57642"/>
    </ligand>
</feature>
<feature type="binding site" evidence="4">
    <location>
        <position position="280"/>
    </location>
    <ligand>
        <name>dihydroxyacetone phosphate</name>
        <dbReference type="ChEBI" id="CHEBI:57642"/>
    </ligand>
</feature>
<feature type="binding site" evidence="1">
    <location>
        <position position="307"/>
    </location>
    <ligand>
        <name>beta-D-fructose 1,6-bisphosphate</name>
        <dbReference type="ChEBI" id="CHEBI:32966"/>
    </ligand>
</feature>
<feature type="binding site" evidence="4">
    <location>
        <position position="309"/>
    </location>
    <ligand>
        <name>dihydroxyacetone phosphate</name>
        <dbReference type="ChEBI" id="CHEBI:57642"/>
    </ligand>
</feature>
<feature type="binding site" evidence="1">
    <location>
        <position position="310"/>
    </location>
    <ligand>
        <name>beta-D-fructose 1,6-bisphosphate</name>
        <dbReference type="ChEBI" id="CHEBI:32966"/>
    </ligand>
</feature>
<feature type="binding site" evidence="4">
    <location>
        <position position="310"/>
    </location>
    <ligand>
        <name>dihydroxyacetone phosphate</name>
        <dbReference type="ChEBI" id="CHEBI:57642"/>
    </ligand>
</feature>
<feature type="site" description="Necessary for preference for fructose 1,6-bisphosphate over fructose 1-phosphate" evidence="1">
    <location>
        <position position="369"/>
    </location>
</feature>
<feature type="helix" evidence="15">
    <location>
        <begin position="16"/>
        <end position="29"/>
    </location>
</feature>
<feature type="strand" evidence="15">
    <location>
        <begin position="35"/>
        <end position="39"/>
    </location>
</feature>
<feature type="helix" evidence="15">
    <location>
        <begin position="43"/>
        <end position="52"/>
    </location>
</feature>
<feature type="helix" evidence="15">
    <location>
        <begin position="59"/>
        <end position="70"/>
    </location>
</feature>
<feature type="helix" evidence="15">
    <location>
        <begin position="75"/>
        <end position="77"/>
    </location>
</feature>
<feature type="strand" evidence="15">
    <location>
        <begin position="79"/>
        <end position="84"/>
    </location>
</feature>
<feature type="helix" evidence="15">
    <location>
        <begin position="86"/>
        <end position="89"/>
    </location>
</feature>
<feature type="strand" evidence="15">
    <location>
        <begin position="94"/>
        <end position="96"/>
    </location>
</feature>
<feature type="helix" evidence="15">
    <location>
        <begin position="99"/>
        <end position="105"/>
    </location>
</feature>
<feature type="strand" evidence="15">
    <location>
        <begin position="109"/>
        <end position="113"/>
    </location>
</feature>
<feature type="strand" evidence="15">
    <location>
        <begin position="118"/>
        <end position="120"/>
    </location>
</feature>
<feature type="strand" evidence="15">
    <location>
        <begin position="124"/>
        <end position="126"/>
    </location>
</feature>
<feature type="strand" evidence="15">
    <location>
        <begin position="128"/>
        <end position="130"/>
    </location>
</feature>
<feature type="helix" evidence="15">
    <location>
        <begin position="136"/>
        <end position="146"/>
    </location>
</feature>
<feature type="strand" evidence="15">
    <location>
        <begin position="150"/>
        <end position="157"/>
    </location>
</feature>
<feature type="helix" evidence="15">
    <location>
        <begin position="161"/>
        <end position="163"/>
    </location>
</feature>
<feature type="helix" evidence="15">
    <location>
        <begin position="168"/>
        <end position="187"/>
    </location>
</feature>
<feature type="strand" evidence="15">
    <location>
        <begin position="191"/>
        <end position="198"/>
    </location>
</feature>
<feature type="helix" evidence="15">
    <location>
        <begin position="206"/>
        <end position="226"/>
    </location>
</feature>
<feature type="helix" evidence="15">
    <location>
        <begin position="231"/>
        <end position="233"/>
    </location>
</feature>
<feature type="helix" evidence="15">
    <location>
        <begin position="253"/>
        <end position="267"/>
    </location>
</feature>
<feature type="strand" evidence="15">
    <location>
        <begin position="274"/>
        <end position="278"/>
    </location>
</feature>
<feature type="helix" evidence="15">
    <location>
        <begin position="284"/>
        <end position="295"/>
    </location>
</feature>
<feature type="strand" evidence="15">
    <location>
        <begin position="301"/>
        <end position="309"/>
    </location>
</feature>
<feature type="helix" evidence="15">
    <location>
        <begin position="310"/>
        <end position="320"/>
    </location>
</feature>
<feature type="helix" evidence="15">
    <location>
        <begin position="324"/>
        <end position="326"/>
    </location>
</feature>
<feature type="helix" evidence="15">
    <location>
        <begin position="327"/>
        <end position="346"/>
    </location>
</feature>
<feature type="helix" evidence="15">
    <location>
        <begin position="362"/>
        <end position="366"/>
    </location>
</feature>
<name>ALF_PLAF7</name>
<dbReference type="EC" id="4.1.2.13" evidence="8"/>
<dbReference type="EMBL" id="LN999946">
    <property type="protein sequence ID" value="CZU00144.1"/>
    <property type="molecule type" value="Genomic_DNA"/>
</dbReference>
<dbReference type="RefSeq" id="XP_001348599.1">
    <property type="nucleotide sequence ID" value="XM_001348563.2"/>
</dbReference>
<dbReference type="PDB" id="4TR9">
    <property type="method" value="X-ray"/>
    <property type="resolution" value="2.11 A"/>
    <property type="chains" value="A/B/C/D=1-369, E=360-366, G=358-366"/>
</dbReference>
<dbReference type="PDBsum" id="4TR9"/>
<dbReference type="SMR" id="Q7KQL9"/>
<dbReference type="BioGRID" id="1207364">
    <property type="interactions" value="4"/>
</dbReference>
<dbReference type="FunCoup" id="Q7KQL9">
    <property type="interactions" value="64"/>
</dbReference>
<dbReference type="IntAct" id="Q7KQL9">
    <property type="interactions" value="4"/>
</dbReference>
<dbReference type="STRING" id="36329.Q7KQL9"/>
<dbReference type="SwissPalm" id="Q7KQL9"/>
<dbReference type="PaxDb" id="5833-PF14_0425"/>
<dbReference type="EnsemblProtists" id="CZU00144">
    <property type="protein sequence ID" value="CZU00144"/>
    <property type="gene ID" value="PF3D7_1444800"/>
</dbReference>
<dbReference type="GeneID" id="812007"/>
<dbReference type="KEGG" id="pfa:PF3D7_1444800"/>
<dbReference type="VEuPathDB" id="PlasmoDB:PF3D7_1444800"/>
<dbReference type="HOGENOM" id="CLU_031243_0_0_1"/>
<dbReference type="InParanoid" id="Q7KQL9"/>
<dbReference type="OMA" id="WRAVITI"/>
<dbReference type="OrthoDB" id="36455at2759"/>
<dbReference type="PhylomeDB" id="Q7KQL9"/>
<dbReference type="Reactome" id="R-PFA-114608">
    <property type="pathway name" value="Platelet degranulation"/>
</dbReference>
<dbReference type="Reactome" id="R-PFA-6798695">
    <property type="pathway name" value="Neutrophil degranulation"/>
</dbReference>
<dbReference type="Reactome" id="R-PFA-70171">
    <property type="pathway name" value="Glycolysis"/>
</dbReference>
<dbReference type="Reactome" id="R-PFA-70263">
    <property type="pathway name" value="Gluconeogenesis"/>
</dbReference>
<dbReference type="Reactome" id="R-PFA-70350">
    <property type="pathway name" value="Fructose catabolism"/>
</dbReference>
<dbReference type="UniPathway" id="UPA00109">
    <property type="reaction ID" value="UER00183"/>
</dbReference>
<dbReference type="EvolutionaryTrace" id="Q7KQL9"/>
<dbReference type="Proteomes" id="UP000001450">
    <property type="component" value="Chromosome 14"/>
</dbReference>
<dbReference type="GO" id="GO:0005737">
    <property type="term" value="C:cytoplasm"/>
    <property type="evidence" value="ECO:0000314"/>
    <property type="project" value="GeneDB"/>
</dbReference>
<dbReference type="GO" id="GO:0005829">
    <property type="term" value="C:cytosol"/>
    <property type="evidence" value="ECO:0000318"/>
    <property type="project" value="GO_Central"/>
</dbReference>
<dbReference type="GO" id="GO:0020002">
    <property type="term" value="C:host cell plasma membrane"/>
    <property type="evidence" value="ECO:0007669"/>
    <property type="project" value="UniProtKB-SubCell"/>
</dbReference>
<dbReference type="GO" id="GO:0016020">
    <property type="term" value="C:membrane"/>
    <property type="evidence" value="ECO:0007669"/>
    <property type="project" value="UniProtKB-SubCell"/>
</dbReference>
<dbReference type="GO" id="GO:0003779">
    <property type="term" value="F:actin binding"/>
    <property type="evidence" value="ECO:0000314"/>
    <property type="project" value="GeneDB"/>
</dbReference>
<dbReference type="GO" id="GO:0004332">
    <property type="term" value="F:fructose-bisphosphate aldolase activity"/>
    <property type="evidence" value="ECO:0000314"/>
    <property type="project" value="UniProtKB"/>
</dbReference>
<dbReference type="GO" id="GO:0008154">
    <property type="term" value="P:actin polymerization or depolymerization"/>
    <property type="evidence" value="ECO:0000314"/>
    <property type="project" value="GeneDB"/>
</dbReference>
<dbReference type="GO" id="GO:0030388">
    <property type="term" value="P:fructose 1,6-bisphosphate metabolic process"/>
    <property type="evidence" value="ECO:0000318"/>
    <property type="project" value="GO_Central"/>
</dbReference>
<dbReference type="GO" id="GO:0006096">
    <property type="term" value="P:glycolytic process"/>
    <property type="evidence" value="ECO:0000314"/>
    <property type="project" value="UniProtKB"/>
</dbReference>
<dbReference type="GO" id="GO:0051289">
    <property type="term" value="P:protein homotetramerization"/>
    <property type="evidence" value="ECO:0000314"/>
    <property type="project" value="UniProtKB"/>
</dbReference>
<dbReference type="CDD" id="cd00948">
    <property type="entry name" value="FBP_aldolase_I_a"/>
    <property type="match status" value="1"/>
</dbReference>
<dbReference type="FunFam" id="3.20.20.70:FF:000187">
    <property type="entry name" value="Fructose-bisphosphate aldolase"/>
    <property type="match status" value="1"/>
</dbReference>
<dbReference type="Gene3D" id="3.20.20.70">
    <property type="entry name" value="Aldolase class I"/>
    <property type="match status" value="1"/>
</dbReference>
<dbReference type="InterPro" id="IPR029768">
    <property type="entry name" value="Aldolase_I_AS"/>
</dbReference>
<dbReference type="InterPro" id="IPR013785">
    <property type="entry name" value="Aldolase_TIM"/>
</dbReference>
<dbReference type="InterPro" id="IPR000741">
    <property type="entry name" value="FBA_I"/>
</dbReference>
<dbReference type="NCBIfam" id="NF033379">
    <property type="entry name" value="FrucBisAld_I"/>
    <property type="match status" value="1"/>
</dbReference>
<dbReference type="PANTHER" id="PTHR11627">
    <property type="entry name" value="FRUCTOSE-BISPHOSPHATE ALDOLASE"/>
    <property type="match status" value="1"/>
</dbReference>
<dbReference type="Pfam" id="PF00274">
    <property type="entry name" value="Glycolytic"/>
    <property type="match status" value="1"/>
</dbReference>
<dbReference type="SUPFAM" id="SSF51569">
    <property type="entry name" value="Aldolase"/>
    <property type="match status" value="1"/>
</dbReference>
<dbReference type="PROSITE" id="PS00158">
    <property type="entry name" value="ALDOLASE_CLASS_I"/>
    <property type="match status" value="1"/>
</dbReference>
<proteinExistence type="evidence at protein level"/>
<gene>
    <name evidence="10" type="primary">FBPA</name>
    <name type="ORF">PF14_0425</name>
    <name type="ORF">PF3D7_1444800</name>
</gene>
<protein>
    <recommendedName>
        <fullName evidence="10">Fructose-bisphosphate aldolase</fullName>
        <ecNumber evidence="8">4.1.2.13</ecNumber>
    </recommendedName>
</protein>
<comment type="function">
    <text evidence="6 7 8 11 12 13">Plays a key role in glycolysis by catalyzing the cleavage of fructose 1,6-bisphosphate into dihydroxyacetone phosphate and glyceraldehyde 3-phosphate (PubMed:26289816). Independently of its catalytic activity, connects the actin filaments, and thus the actomyosin motor, to cell surface adhesins of the thrombospondin-related anonymous protein (TRAP), the erythrocyte binding ligand (EBL) and reticulocyte binding homolog (RH) protein families; this interaction is probably involved in transducing the motor force across the parasite surface required for sporozoite and ookinete gliding motility and merozoite invasion (Probable) (PubMed:22991428, PubMed:25261592). Stimulates actin polymerisation (PubMed:25261592).</text>
</comment>
<comment type="catalytic activity">
    <reaction evidence="8">
        <text>beta-D-fructose 1,6-bisphosphate = D-glyceraldehyde 3-phosphate + dihydroxyacetone phosphate</text>
        <dbReference type="Rhea" id="RHEA:14729"/>
        <dbReference type="ChEBI" id="CHEBI:32966"/>
        <dbReference type="ChEBI" id="CHEBI:57642"/>
        <dbReference type="ChEBI" id="CHEBI:59776"/>
        <dbReference type="EC" id="4.1.2.13"/>
    </reaction>
</comment>
<comment type="activity regulation">
    <text evidence="8">The cytoplasmic tail of TRAP and probably other adhesins acts as a competitive inhibitor as the binding sites of the glycolytic substrate fructose 1,6-bisphosphate and TRAP partially overlap.</text>
</comment>
<comment type="pathway">
    <text evidence="8">Carbohydrate degradation; glycolysis; D-glyceraldehyde 3-phosphate and glycerone phosphate from D-glucose: step 4/4.</text>
</comment>
<comment type="subunit">
    <text evidence="3 5 6 7 8 9 12">Homotetramer (PubMed:26289816). Interacts with TRAP (via cytoplasmic domain); the interaction prevents substrate binding and thereby inhibits aldolase activity (Probable) (PubMed:16321976, PubMed:26289816). Interacts with MTRAP (via cytoplasmic domain); MTRAP phosphorylation may increase the binding to FBPA (PubMed:16321976). Interact with RH1 (via cytoplasmic domain) (PubMed:22991428, PubMed:27607074). Interacts with RH2b (via cytoplasmic domain) (PubMed:22991428, PubMed:27607074). Interacts with RH4 (via cytoplasmic domain) (PubMed:22991428, PubMed:27607074). Interacts with AMA1 (via cytoplasmic domain); the interaction is weak, however it may be increased upon AMA1 phosphorylation (PubMed:27607074). Interacts with EBA140 (via cytoplasmic domain); the interaction is weak (PubMed:27607074). Interacts with EBA175 (via cytoplasmic domain); the interaction is weak (PubMed:27607074). Interacts with EBA181 (via cytoplasmic domain); the interaction is weak (PubMed:27607074). Interacts with G-actin and F-actin (PubMed:25261592). May interact with ACT2/actin II; the interaction inhibits FBPA catalytic activity (By similarity). Interacts with human SLC4A1/band 3 (via N-terminus); the interaction inhibits FBPA catalytic activity (By similarity).</text>
</comment>
<comment type="subcellular location">
    <subcellularLocation>
        <location evidence="2">Cytoplasm</location>
    </subcellularLocation>
    <subcellularLocation>
        <location evidence="2">Membrane</location>
        <topology evidence="2">Peripheral membrane protein</topology>
        <orientation evidence="2">Cytoplasmic side</orientation>
    </subcellularLocation>
    <subcellularLocation>
        <location evidence="3">Host cell membrane</location>
        <topology evidence="2">Peripheral membrane protein</topology>
        <orientation evidence="2">Cytoplasmic side</orientation>
    </subcellularLocation>
</comment>
<comment type="developmental stage">
    <text evidence="5">Expressed during parasite asexual blood stages, including in schizonts (at protein level).</text>
</comment>
<comment type="similarity">
    <text evidence="10">Belongs to the class I fructose-bisphosphate aldolase family.</text>
</comment>